<name>TUSA_YERE8</name>
<accession>A1JIB4</accession>
<feature type="chain" id="PRO_1000050034" description="Sulfur carrier protein TusA">
    <location>
        <begin position="1"/>
        <end position="84"/>
    </location>
</feature>
<feature type="active site" description="Cysteine persulfide intermediate" evidence="1">
    <location>
        <position position="19"/>
    </location>
</feature>
<protein>
    <recommendedName>
        <fullName evidence="1">Sulfur carrier protein TusA</fullName>
    </recommendedName>
    <alternativeName>
        <fullName evidence="1">Sulfur mediator TusA</fullName>
    </alternativeName>
    <alternativeName>
        <fullName evidence="1">Sulfur transfer protein TusA</fullName>
    </alternativeName>
    <alternativeName>
        <fullName evidence="1">tRNA 2-thiouridine synthesizing protein A</fullName>
    </alternativeName>
</protein>
<comment type="function">
    <text evidence="1">Sulfur carrier protein involved in sulfur trafficking in the cell. Part of a sulfur-relay system required for 2-thiolation during synthesis of 2-thiouridine of the modified wobble base 5-methylaminomethyl-2-thiouridine (mnm(5)s(2)U) in tRNA. Interacts with IscS and stimulates its cysteine desulfurase activity. Accepts an activated sulfur from IscS, which is then transferred to TusD, and thus determines the direction of sulfur flow from IscS to 2-thiouridine formation. Also appears to be involved in sulfur transfer for the biosynthesis of molybdopterin.</text>
</comment>
<comment type="pathway">
    <text evidence="1">tRNA modification.</text>
</comment>
<comment type="subunit">
    <text evidence="1">Interacts with IscS.</text>
</comment>
<comment type="subcellular location">
    <subcellularLocation>
        <location evidence="1">Cytoplasm</location>
    </subcellularLocation>
</comment>
<comment type="similarity">
    <text evidence="1">Belongs to the sulfur carrier protein TusA family.</text>
</comment>
<proteinExistence type="inferred from homology"/>
<dbReference type="EMBL" id="AM286415">
    <property type="protein sequence ID" value="CAL10352.1"/>
    <property type="molecule type" value="Genomic_DNA"/>
</dbReference>
<dbReference type="RefSeq" id="WP_005176396.1">
    <property type="nucleotide sequence ID" value="NC_008800.1"/>
</dbReference>
<dbReference type="RefSeq" id="YP_001004604.1">
    <property type="nucleotide sequence ID" value="NC_008800.1"/>
</dbReference>
<dbReference type="SMR" id="A1JIB4"/>
<dbReference type="GeneID" id="58049363"/>
<dbReference type="KEGG" id="yen:YE0217"/>
<dbReference type="PATRIC" id="fig|393305.7.peg.309"/>
<dbReference type="eggNOG" id="COG0425">
    <property type="taxonomic scope" value="Bacteria"/>
</dbReference>
<dbReference type="HOGENOM" id="CLU_165255_5_0_6"/>
<dbReference type="OrthoDB" id="9797352at2"/>
<dbReference type="Proteomes" id="UP000000642">
    <property type="component" value="Chromosome"/>
</dbReference>
<dbReference type="GO" id="GO:0005737">
    <property type="term" value="C:cytoplasm"/>
    <property type="evidence" value="ECO:0007669"/>
    <property type="project" value="UniProtKB-SubCell"/>
</dbReference>
<dbReference type="GO" id="GO:0097163">
    <property type="term" value="F:sulfur carrier activity"/>
    <property type="evidence" value="ECO:0007669"/>
    <property type="project" value="UniProtKB-UniRule"/>
</dbReference>
<dbReference type="GO" id="GO:0002143">
    <property type="term" value="P:tRNA wobble position uridine thiolation"/>
    <property type="evidence" value="ECO:0007669"/>
    <property type="project" value="InterPro"/>
</dbReference>
<dbReference type="CDD" id="cd03423">
    <property type="entry name" value="SirA"/>
    <property type="match status" value="1"/>
</dbReference>
<dbReference type="Gene3D" id="3.30.110.40">
    <property type="entry name" value="TusA-like domain"/>
    <property type="match status" value="1"/>
</dbReference>
<dbReference type="HAMAP" id="MF_00413">
    <property type="entry name" value="Thiourid_synth_A"/>
    <property type="match status" value="1"/>
</dbReference>
<dbReference type="InterPro" id="IPR022931">
    <property type="entry name" value="Sulphur_carrier_TusA"/>
</dbReference>
<dbReference type="InterPro" id="IPR001455">
    <property type="entry name" value="TusA-like"/>
</dbReference>
<dbReference type="InterPro" id="IPR036868">
    <property type="entry name" value="TusA-like_sf"/>
</dbReference>
<dbReference type="NCBIfam" id="NF001423">
    <property type="entry name" value="PRK00299.1"/>
    <property type="match status" value="1"/>
</dbReference>
<dbReference type="PANTHER" id="PTHR33279:SF2">
    <property type="entry name" value="SULFUR CARRIER PROTEIN TUSA"/>
    <property type="match status" value="1"/>
</dbReference>
<dbReference type="PANTHER" id="PTHR33279">
    <property type="entry name" value="SULFUR CARRIER PROTEIN YEDF-RELATED"/>
    <property type="match status" value="1"/>
</dbReference>
<dbReference type="Pfam" id="PF01206">
    <property type="entry name" value="TusA"/>
    <property type="match status" value="1"/>
</dbReference>
<dbReference type="SUPFAM" id="SSF64307">
    <property type="entry name" value="SirA-like"/>
    <property type="match status" value="1"/>
</dbReference>
<dbReference type="PROSITE" id="PS01148">
    <property type="entry name" value="UPF0033"/>
    <property type="match status" value="1"/>
</dbReference>
<evidence type="ECO:0000255" key="1">
    <source>
        <dbReference type="HAMAP-Rule" id="MF_00413"/>
    </source>
</evidence>
<keyword id="KW-0963">Cytoplasm</keyword>
<keyword id="KW-0819">tRNA processing</keyword>
<organism>
    <name type="scientific">Yersinia enterocolitica serotype O:8 / biotype 1B (strain NCTC 13174 / 8081)</name>
    <dbReference type="NCBI Taxonomy" id="393305"/>
    <lineage>
        <taxon>Bacteria</taxon>
        <taxon>Pseudomonadati</taxon>
        <taxon>Pseudomonadota</taxon>
        <taxon>Gammaproteobacteria</taxon>
        <taxon>Enterobacterales</taxon>
        <taxon>Yersiniaceae</taxon>
        <taxon>Yersinia</taxon>
    </lineage>
</organism>
<sequence>MTDIFANPDKTLDALGLRCPEPVMMVRKTVRHMEDGQTLLIIADDPATTRDIPGFCRFMDHQLLAQDTGQTPYRYLVKKGAKAE</sequence>
<gene>
    <name evidence="1" type="primary">tusA</name>
    <name type="ordered locus">YE0217</name>
</gene>
<reference key="1">
    <citation type="journal article" date="2006" name="PLoS Genet.">
        <title>The complete genome sequence and comparative genome analysis of the high pathogenicity Yersinia enterocolitica strain 8081.</title>
        <authorList>
            <person name="Thomson N.R."/>
            <person name="Howard S."/>
            <person name="Wren B.W."/>
            <person name="Holden M.T.G."/>
            <person name="Crossman L."/>
            <person name="Challis G.L."/>
            <person name="Churcher C."/>
            <person name="Mungall K."/>
            <person name="Brooks K."/>
            <person name="Chillingworth T."/>
            <person name="Feltwell T."/>
            <person name="Abdellah Z."/>
            <person name="Hauser H."/>
            <person name="Jagels K."/>
            <person name="Maddison M."/>
            <person name="Moule S."/>
            <person name="Sanders M."/>
            <person name="Whitehead S."/>
            <person name="Quail M.A."/>
            <person name="Dougan G."/>
            <person name="Parkhill J."/>
            <person name="Prentice M.B."/>
        </authorList>
    </citation>
    <scope>NUCLEOTIDE SEQUENCE [LARGE SCALE GENOMIC DNA]</scope>
    <source>
        <strain>NCTC 13174 / 8081</strain>
    </source>
</reference>